<dbReference type="EMBL" id="U00096">
    <property type="protein sequence ID" value="AAC74524.1"/>
    <property type="molecule type" value="Genomic_DNA"/>
</dbReference>
<dbReference type="EMBL" id="AP009048">
    <property type="protein sequence ID" value="BAA15071.1"/>
    <property type="molecule type" value="Genomic_DNA"/>
</dbReference>
<dbReference type="PIR" id="E64896">
    <property type="entry name" value="E64896"/>
</dbReference>
<dbReference type="RefSeq" id="NP_415959.1">
    <property type="nucleotide sequence ID" value="NC_000913.3"/>
</dbReference>
<dbReference type="RefSeq" id="WP_001251304.1">
    <property type="nucleotide sequence ID" value="NZ_SSZK01000021.1"/>
</dbReference>
<dbReference type="SMR" id="P77156"/>
<dbReference type="BioGRID" id="4260191">
    <property type="interactions" value="93"/>
</dbReference>
<dbReference type="ComplexPortal" id="CPX-4446">
    <property type="entry name" value="YdcSTUV ABC transporter complex"/>
</dbReference>
<dbReference type="FunCoup" id="P77156">
    <property type="interactions" value="108"/>
</dbReference>
<dbReference type="STRING" id="511145.b1442"/>
<dbReference type="TCDB" id="3.A.1.11.9">
    <property type="family name" value="the atp-binding cassette (abc) superfamily"/>
</dbReference>
<dbReference type="PaxDb" id="511145-b1442"/>
<dbReference type="EnsemblBacteria" id="AAC74524">
    <property type="protein sequence ID" value="AAC74524"/>
    <property type="gene ID" value="b1442"/>
</dbReference>
<dbReference type="GeneID" id="945976"/>
<dbReference type="KEGG" id="ecj:JW1437"/>
<dbReference type="KEGG" id="eco:b1442"/>
<dbReference type="KEGG" id="ecoc:C3026_08390"/>
<dbReference type="PATRIC" id="fig|1411691.4.peg.826"/>
<dbReference type="EchoBASE" id="EB3527"/>
<dbReference type="eggNOG" id="COG1176">
    <property type="taxonomic scope" value="Bacteria"/>
</dbReference>
<dbReference type="HOGENOM" id="CLU_016047_18_1_6"/>
<dbReference type="InParanoid" id="P77156"/>
<dbReference type="OMA" id="YYMARYT"/>
<dbReference type="OrthoDB" id="9808619at2"/>
<dbReference type="PhylomeDB" id="P77156"/>
<dbReference type="BioCyc" id="EcoCyc:YDCU-MONOMER"/>
<dbReference type="BioCyc" id="MetaCyc:YDCU-MONOMER"/>
<dbReference type="PRO" id="PR:P77156"/>
<dbReference type="Proteomes" id="UP000000625">
    <property type="component" value="Chromosome"/>
</dbReference>
<dbReference type="GO" id="GO:0055052">
    <property type="term" value="C:ATP-binding cassette (ABC) transporter complex, substrate-binding subunit-containing"/>
    <property type="evidence" value="ECO:0000303"/>
    <property type="project" value="ComplexPortal"/>
</dbReference>
<dbReference type="GO" id="GO:0016020">
    <property type="term" value="C:membrane"/>
    <property type="evidence" value="ECO:0000303"/>
    <property type="project" value="ComplexPortal"/>
</dbReference>
<dbReference type="GO" id="GO:0005886">
    <property type="term" value="C:plasma membrane"/>
    <property type="evidence" value="ECO:0000255"/>
    <property type="project" value="EcoCyc"/>
</dbReference>
<dbReference type="GO" id="GO:0055085">
    <property type="term" value="P:transmembrane transport"/>
    <property type="evidence" value="ECO:0000303"/>
    <property type="project" value="ComplexPortal"/>
</dbReference>
<dbReference type="CDD" id="cd06261">
    <property type="entry name" value="TM_PBP2"/>
    <property type="match status" value="1"/>
</dbReference>
<dbReference type="FunFam" id="1.10.3720.10:FF:000070">
    <property type="entry name" value="Inner membrane ABC transporter permease YdcU"/>
    <property type="match status" value="1"/>
</dbReference>
<dbReference type="Gene3D" id="1.10.3720.10">
    <property type="entry name" value="MetI-like"/>
    <property type="match status" value="1"/>
</dbReference>
<dbReference type="InterPro" id="IPR000515">
    <property type="entry name" value="MetI-like"/>
</dbReference>
<dbReference type="InterPro" id="IPR035906">
    <property type="entry name" value="MetI-like_sf"/>
</dbReference>
<dbReference type="PANTHER" id="PTHR42929:SF1">
    <property type="entry name" value="INNER MEMBRANE ABC TRANSPORTER PERMEASE PROTEIN YDCU-RELATED"/>
    <property type="match status" value="1"/>
</dbReference>
<dbReference type="PANTHER" id="PTHR42929">
    <property type="entry name" value="INNER MEMBRANE ABC TRANSPORTER PERMEASE PROTEIN YDCU-RELATED-RELATED"/>
    <property type="match status" value="1"/>
</dbReference>
<dbReference type="Pfam" id="PF00528">
    <property type="entry name" value="BPD_transp_1"/>
    <property type="match status" value="1"/>
</dbReference>
<dbReference type="SUPFAM" id="SSF161098">
    <property type="entry name" value="MetI-like"/>
    <property type="match status" value="1"/>
</dbReference>
<dbReference type="PROSITE" id="PS50928">
    <property type="entry name" value="ABC_TM1"/>
    <property type="match status" value="1"/>
</dbReference>
<organism>
    <name type="scientific">Escherichia coli (strain K12)</name>
    <dbReference type="NCBI Taxonomy" id="83333"/>
    <lineage>
        <taxon>Bacteria</taxon>
        <taxon>Pseudomonadati</taxon>
        <taxon>Pseudomonadota</taxon>
        <taxon>Gammaproteobacteria</taxon>
        <taxon>Enterobacterales</taxon>
        <taxon>Enterobacteriaceae</taxon>
        <taxon>Escherichia</taxon>
    </lineage>
</organism>
<reference key="1">
    <citation type="journal article" date="1996" name="DNA Res.">
        <title>A 570-kb DNA sequence of the Escherichia coli K-12 genome corresponding to the 28.0-40.1 min region on the linkage map.</title>
        <authorList>
            <person name="Aiba H."/>
            <person name="Baba T."/>
            <person name="Fujita K."/>
            <person name="Hayashi K."/>
            <person name="Inada T."/>
            <person name="Isono K."/>
            <person name="Itoh T."/>
            <person name="Kasai H."/>
            <person name="Kashimoto K."/>
            <person name="Kimura S."/>
            <person name="Kitakawa M."/>
            <person name="Kitagawa M."/>
            <person name="Makino K."/>
            <person name="Miki T."/>
            <person name="Mizobuchi K."/>
            <person name="Mori H."/>
            <person name="Mori T."/>
            <person name="Motomura K."/>
            <person name="Nakade S."/>
            <person name="Nakamura Y."/>
            <person name="Nashimoto H."/>
            <person name="Nishio Y."/>
            <person name="Oshima T."/>
            <person name="Saito N."/>
            <person name="Sampei G."/>
            <person name="Seki Y."/>
            <person name="Sivasundaram S."/>
            <person name="Tagami H."/>
            <person name="Takeda J."/>
            <person name="Takemoto K."/>
            <person name="Takeuchi Y."/>
            <person name="Wada C."/>
            <person name="Yamamoto Y."/>
            <person name="Horiuchi T."/>
        </authorList>
    </citation>
    <scope>NUCLEOTIDE SEQUENCE [LARGE SCALE GENOMIC DNA]</scope>
    <source>
        <strain>K12 / W3110 / ATCC 27325 / DSM 5911</strain>
    </source>
</reference>
<reference key="2">
    <citation type="journal article" date="1997" name="Science">
        <title>The complete genome sequence of Escherichia coli K-12.</title>
        <authorList>
            <person name="Blattner F.R."/>
            <person name="Plunkett G. III"/>
            <person name="Bloch C.A."/>
            <person name="Perna N.T."/>
            <person name="Burland V."/>
            <person name="Riley M."/>
            <person name="Collado-Vides J."/>
            <person name="Glasner J.D."/>
            <person name="Rode C.K."/>
            <person name="Mayhew G.F."/>
            <person name="Gregor J."/>
            <person name="Davis N.W."/>
            <person name="Kirkpatrick H.A."/>
            <person name="Goeden M.A."/>
            <person name="Rose D.J."/>
            <person name="Mau B."/>
            <person name="Shao Y."/>
        </authorList>
    </citation>
    <scope>NUCLEOTIDE SEQUENCE [LARGE SCALE GENOMIC DNA]</scope>
    <source>
        <strain>K12 / MG1655 / ATCC 47076</strain>
    </source>
</reference>
<reference key="3">
    <citation type="journal article" date="2006" name="Mol. Syst. Biol.">
        <title>Highly accurate genome sequences of Escherichia coli K-12 strains MG1655 and W3110.</title>
        <authorList>
            <person name="Hayashi K."/>
            <person name="Morooka N."/>
            <person name="Yamamoto Y."/>
            <person name="Fujita K."/>
            <person name="Isono K."/>
            <person name="Choi S."/>
            <person name="Ohtsubo E."/>
            <person name="Baba T."/>
            <person name="Wanner B.L."/>
            <person name="Mori H."/>
            <person name="Horiuchi T."/>
        </authorList>
    </citation>
    <scope>NUCLEOTIDE SEQUENCE [LARGE SCALE GENOMIC DNA]</scope>
    <source>
        <strain>K12 / W3110 / ATCC 27325 / DSM 5911</strain>
    </source>
</reference>
<reference key="4">
    <citation type="journal article" date="2005" name="Science">
        <title>Global topology analysis of the Escherichia coli inner membrane proteome.</title>
        <authorList>
            <person name="Daley D.O."/>
            <person name="Rapp M."/>
            <person name="Granseth E."/>
            <person name="Melen K."/>
            <person name="Drew D."/>
            <person name="von Heijne G."/>
        </authorList>
    </citation>
    <scope>TOPOLOGY [LARGE SCALE ANALYSIS]</scope>
    <scope>SUBCELLULAR LOCATION</scope>
    <source>
        <strain>K12 / MG1655 / ATCC 47076</strain>
    </source>
</reference>
<reference key="5">
    <citation type="journal article" date="2016" name="Biochem. Biophys. Res. Commun.">
        <title>Two different routes for double-stranded DNA transfer in natural and artificial transformation of Escherichia coli.</title>
        <authorList>
            <person name="Sun D."/>
        </authorList>
    </citation>
    <scope>DISRUPTION PHENOTYPE</scope>
</reference>
<gene>
    <name type="primary">ydcU</name>
    <name type="ordered locus">b1442</name>
    <name type="ordered locus">JW1437</name>
</gene>
<protein>
    <recommendedName>
        <fullName evidence="5">Inner membrane ABC transporter permease protein YdcU</fullName>
    </recommendedName>
</protein>
<sequence length="313" mass="34360">MAMNVLQSPSRPGLGKVSGFFWHNPGLGLFLLLLGPLMWFGIVYFGSLLTLLWQGFYTFDDFTMSVTPELTLANIRALFNPANYDIILRTLTMAVAVTIASAILAFPMAWYMARYTSGKMKAFFYIAVMLPMWASYIVKAYAWTLLLAKDGVAQWFLQHLGLEPLLTAFLTLPAVGGNTLSTSGLGRFLVFLYIWLPFMILPVQAALERLPPSLLQASADLGARPRQTFRYVVLPLAIPGIAAGSIFTFSLTLGDFIVPQLVGPPGYFIGNMVYSQQGAIGNMPMAAAFTLVPIILIALYLAFVKRLGAFDAL</sequence>
<evidence type="ECO:0000255" key="1"/>
<evidence type="ECO:0000255" key="2">
    <source>
        <dbReference type="PROSITE-ProRule" id="PRU00441"/>
    </source>
</evidence>
<evidence type="ECO:0000269" key="3">
    <source>
    </source>
</evidence>
<evidence type="ECO:0000269" key="4">
    <source>
    </source>
</evidence>
<evidence type="ECO:0000305" key="5"/>
<feature type="chain" id="PRO_0000060242" description="Inner membrane ABC transporter permease protein YdcU">
    <location>
        <begin position="1"/>
        <end position="313"/>
    </location>
</feature>
<feature type="topological domain" description="Cytoplasmic" evidence="5">
    <location>
        <begin position="1"/>
        <end position="25"/>
    </location>
</feature>
<feature type="transmembrane region" description="Helical" evidence="1">
    <location>
        <begin position="26"/>
        <end position="46"/>
    </location>
</feature>
<feature type="topological domain" description="Periplasmic" evidence="5">
    <location>
        <begin position="47"/>
        <end position="92"/>
    </location>
</feature>
<feature type="transmembrane region" description="Helical" evidence="1">
    <location>
        <begin position="93"/>
        <end position="113"/>
    </location>
</feature>
<feature type="topological domain" description="Cytoplasmic" evidence="5">
    <location>
        <begin position="114"/>
        <end position="122"/>
    </location>
</feature>
<feature type="transmembrane region" description="Helical" evidence="1">
    <location>
        <begin position="123"/>
        <end position="143"/>
    </location>
</feature>
<feature type="topological domain" description="Periplasmic" evidence="5">
    <location>
        <begin position="144"/>
        <end position="154"/>
    </location>
</feature>
<feature type="transmembrane region" description="Helical" evidence="1">
    <location>
        <begin position="155"/>
        <end position="175"/>
    </location>
</feature>
<feature type="topological domain" description="Cytoplasmic" evidence="5">
    <location>
        <begin position="176"/>
        <end position="187"/>
    </location>
</feature>
<feature type="transmembrane region" description="Helical" evidence="1">
    <location>
        <begin position="188"/>
        <end position="208"/>
    </location>
</feature>
<feature type="topological domain" description="Periplasmic" evidence="5">
    <location>
        <begin position="209"/>
        <end position="230"/>
    </location>
</feature>
<feature type="transmembrane region" description="Helical" evidence="1">
    <location>
        <begin position="231"/>
        <end position="251"/>
    </location>
</feature>
<feature type="topological domain" description="Cytoplasmic" evidence="5">
    <location>
        <position position="252"/>
    </location>
</feature>
<feature type="transmembrane region" description="Helical" evidence="1">
    <location>
        <begin position="253"/>
        <end position="273"/>
    </location>
</feature>
<feature type="topological domain" description="Periplasmic" evidence="5">
    <location>
        <begin position="274"/>
        <end position="283"/>
    </location>
</feature>
<feature type="transmembrane region" description="Helical" evidence="1">
    <location>
        <begin position="284"/>
        <end position="304"/>
    </location>
</feature>
<feature type="topological domain" description="Cytoplasmic" evidence="3">
    <location>
        <begin position="305"/>
        <end position="313"/>
    </location>
</feature>
<feature type="domain" description="ABC transmembrane type-1" evidence="2">
    <location>
        <begin position="87"/>
        <end position="302"/>
    </location>
</feature>
<keyword id="KW-0997">Cell inner membrane</keyword>
<keyword id="KW-1003">Cell membrane</keyword>
<keyword id="KW-0472">Membrane</keyword>
<keyword id="KW-1185">Reference proteome</keyword>
<keyword id="KW-0812">Transmembrane</keyword>
<keyword id="KW-1133">Transmembrane helix</keyword>
<keyword id="KW-0813">Transport</keyword>
<name>YDCU_ECOLI</name>
<comment type="function">
    <text evidence="5">Probably part of the ABC transporter complex YdcSTUV. Probably responsible for the translocation of the substrate across the membrane.</text>
</comment>
<comment type="subcellular location">
    <subcellularLocation>
        <location evidence="3">Cell inner membrane</location>
        <topology evidence="1">Multi-pass membrane protein</topology>
    </subcellularLocation>
</comment>
<comment type="disruption phenotype">
    <text evidence="4">Inactivation of the gene does not significantly affect natural transformation.</text>
</comment>
<comment type="similarity">
    <text evidence="5">Belongs to the binding-protein-dependent transport system permease family. CysTW subfamily.</text>
</comment>
<accession>P77156</accession>
<proteinExistence type="evidence at protein level"/>